<reference key="1">
    <citation type="journal article" date="2005" name="J. Bacteriol.">
        <title>Genomic sequence of an otitis media isolate of nontypeable Haemophilus influenzae: comparative study with H. influenzae serotype d, strain KW20.</title>
        <authorList>
            <person name="Harrison A."/>
            <person name="Dyer D.W."/>
            <person name="Gillaspy A."/>
            <person name="Ray W.C."/>
            <person name="Mungur R."/>
            <person name="Carson M.B."/>
            <person name="Zhong H."/>
            <person name="Gipson J."/>
            <person name="Gipson M."/>
            <person name="Johnson L.S."/>
            <person name="Lewis L."/>
            <person name="Bakaletz L.O."/>
            <person name="Munson R.S. Jr."/>
        </authorList>
    </citation>
    <scope>NUCLEOTIDE SEQUENCE [LARGE SCALE GENOMIC DNA]</scope>
    <source>
        <strain>86-028NP</strain>
    </source>
</reference>
<evidence type="ECO:0000255" key="1">
    <source>
        <dbReference type="HAMAP-Rule" id="MF_00418"/>
    </source>
</evidence>
<evidence type="ECO:0000305" key="2"/>
<gene>
    <name evidence="1" type="primary">dapA</name>
    <name type="ordered locus">NTHI0362</name>
</gene>
<proteinExistence type="inferred from homology"/>
<accession>Q4QNT3</accession>
<feature type="chain" id="PRO_1000050192" description="4-hydroxy-tetrahydrodipicolinate synthase">
    <location>
        <begin position="1"/>
        <end position="298"/>
    </location>
</feature>
<feature type="active site" description="Proton donor/acceptor" evidence="1">
    <location>
        <position position="139"/>
    </location>
</feature>
<feature type="active site" description="Schiff-base intermediate with substrate" evidence="1">
    <location>
        <position position="167"/>
    </location>
</feature>
<feature type="binding site" evidence="1">
    <location>
        <position position="51"/>
    </location>
    <ligand>
        <name>pyruvate</name>
        <dbReference type="ChEBI" id="CHEBI:15361"/>
    </ligand>
</feature>
<feature type="binding site" evidence="1">
    <location>
        <position position="209"/>
    </location>
    <ligand>
        <name>pyruvate</name>
        <dbReference type="ChEBI" id="CHEBI:15361"/>
    </ligand>
</feature>
<feature type="site" description="Part of a proton relay during catalysis" evidence="1">
    <location>
        <position position="50"/>
    </location>
</feature>
<feature type="site" description="Part of a proton relay during catalysis" evidence="1">
    <location>
        <position position="113"/>
    </location>
</feature>
<keyword id="KW-0028">Amino-acid biosynthesis</keyword>
<keyword id="KW-0963">Cytoplasm</keyword>
<keyword id="KW-0220">Diaminopimelate biosynthesis</keyword>
<keyword id="KW-0456">Lyase</keyword>
<keyword id="KW-0457">Lysine biosynthesis</keyword>
<keyword id="KW-0704">Schiff base</keyword>
<protein>
    <recommendedName>
        <fullName evidence="1">4-hydroxy-tetrahydrodipicolinate synthase</fullName>
        <shortName evidence="1">HTPA synthase</shortName>
        <ecNumber evidence="1">4.3.3.7</ecNumber>
    </recommendedName>
</protein>
<dbReference type="EC" id="4.3.3.7" evidence="1"/>
<dbReference type="EMBL" id="CP000057">
    <property type="protein sequence ID" value="AAX87314.1"/>
    <property type="molecule type" value="Genomic_DNA"/>
</dbReference>
<dbReference type="RefSeq" id="WP_005692198.1">
    <property type="nucleotide sequence ID" value="NC_007146.2"/>
</dbReference>
<dbReference type="SMR" id="Q4QNT3"/>
<dbReference type="KEGG" id="hit:NTHI0362"/>
<dbReference type="HOGENOM" id="CLU_049343_7_1_6"/>
<dbReference type="UniPathway" id="UPA00034">
    <property type="reaction ID" value="UER00017"/>
</dbReference>
<dbReference type="Proteomes" id="UP000002525">
    <property type="component" value="Chromosome"/>
</dbReference>
<dbReference type="GO" id="GO:0005829">
    <property type="term" value="C:cytosol"/>
    <property type="evidence" value="ECO:0007669"/>
    <property type="project" value="TreeGrafter"/>
</dbReference>
<dbReference type="GO" id="GO:0008840">
    <property type="term" value="F:4-hydroxy-tetrahydrodipicolinate synthase activity"/>
    <property type="evidence" value="ECO:0007669"/>
    <property type="project" value="UniProtKB-UniRule"/>
</dbReference>
<dbReference type="GO" id="GO:0019877">
    <property type="term" value="P:diaminopimelate biosynthetic process"/>
    <property type="evidence" value="ECO:0007669"/>
    <property type="project" value="UniProtKB-UniRule"/>
</dbReference>
<dbReference type="GO" id="GO:0009089">
    <property type="term" value="P:lysine biosynthetic process via diaminopimelate"/>
    <property type="evidence" value="ECO:0007669"/>
    <property type="project" value="UniProtKB-UniRule"/>
</dbReference>
<dbReference type="CDD" id="cd00950">
    <property type="entry name" value="DHDPS"/>
    <property type="match status" value="1"/>
</dbReference>
<dbReference type="Gene3D" id="3.20.20.70">
    <property type="entry name" value="Aldolase class I"/>
    <property type="match status" value="1"/>
</dbReference>
<dbReference type="HAMAP" id="MF_00418">
    <property type="entry name" value="DapA"/>
    <property type="match status" value="1"/>
</dbReference>
<dbReference type="InterPro" id="IPR013785">
    <property type="entry name" value="Aldolase_TIM"/>
</dbReference>
<dbReference type="InterPro" id="IPR005263">
    <property type="entry name" value="DapA"/>
</dbReference>
<dbReference type="InterPro" id="IPR002220">
    <property type="entry name" value="DapA-like"/>
</dbReference>
<dbReference type="InterPro" id="IPR020625">
    <property type="entry name" value="Schiff_base-form_aldolases_AS"/>
</dbReference>
<dbReference type="InterPro" id="IPR020624">
    <property type="entry name" value="Schiff_base-form_aldolases_CS"/>
</dbReference>
<dbReference type="NCBIfam" id="TIGR00674">
    <property type="entry name" value="dapA"/>
    <property type="match status" value="1"/>
</dbReference>
<dbReference type="PANTHER" id="PTHR12128:SF66">
    <property type="entry name" value="4-HYDROXY-2-OXOGLUTARATE ALDOLASE, MITOCHONDRIAL"/>
    <property type="match status" value="1"/>
</dbReference>
<dbReference type="PANTHER" id="PTHR12128">
    <property type="entry name" value="DIHYDRODIPICOLINATE SYNTHASE"/>
    <property type="match status" value="1"/>
</dbReference>
<dbReference type="Pfam" id="PF00701">
    <property type="entry name" value="DHDPS"/>
    <property type="match status" value="1"/>
</dbReference>
<dbReference type="PIRSF" id="PIRSF001365">
    <property type="entry name" value="DHDPS"/>
    <property type="match status" value="1"/>
</dbReference>
<dbReference type="PRINTS" id="PR00146">
    <property type="entry name" value="DHPICSNTHASE"/>
</dbReference>
<dbReference type="SMART" id="SM01130">
    <property type="entry name" value="DHDPS"/>
    <property type="match status" value="1"/>
</dbReference>
<dbReference type="SUPFAM" id="SSF51569">
    <property type="entry name" value="Aldolase"/>
    <property type="match status" value="1"/>
</dbReference>
<dbReference type="PROSITE" id="PS00665">
    <property type="entry name" value="DHDPS_1"/>
    <property type="match status" value="1"/>
</dbReference>
<dbReference type="PROSITE" id="PS00666">
    <property type="entry name" value="DHDPS_2"/>
    <property type="match status" value="1"/>
</dbReference>
<organism>
    <name type="scientific">Haemophilus influenzae (strain 86-028NP)</name>
    <dbReference type="NCBI Taxonomy" id="281310"/>
    <lineage>
        <taxon>Bacteria</taxon>
        <taxon>Pseudomonadati</taxon>
        <taxon>Pseudomonadota</taxon>
        <taxon>Gammaproteobacteria</taxon>
        <taxon>Pasteurellales</taxon>
        <taxon>Pasteurellaceae</taxon>
        <taxon>Haemophilus</taxon>
    </lineage>
</organism>
<comment type="function">
    <text evidence="1">Catalyzes the condensation of (S)-aspartate-beta-semialdehyde [(S)-ASA] and pyruvate to 4-hydroxy-tetrahydrodipicolinate (HTPA).</text>
</comment>
<comment type="catalytic activity">
    <reaction evidence="1">
        <text>L-aspartate 4-semialdehyde + pyruvate = (2S,4S)-4-hydroxy-2,3,4,5-tetrahydrodipicolinate + H2O + H(+)</text>
        <dbReference type="Rhea" id="RHEA:34171"/>
        <dbReference type="ChEBI" id="CHEBI:15361"/>
        <dbReference type="ChEBI" id="CHEBI:15377"/>
        <dbReference type="ChEBI" id="CHEBI:15378"/>
        <dbReference type="ChEBI" id="CHEBI:67139"/>
        <dbReference type="ChEBI" id="CHEBI:537519"/>
        <dbReference type="EC" id="4.3.3.7"/>
    </reaction>
</comment>
<comment type="pathway">
    <text evidence="1">Amino-acid biosynthesis; L-lysine biosynthesis via DAP pathway; (S)-tetrahydrodipicolinate from L-aspartate: step 3/4.</text>
</comment>
<comment type="subunit">
    <text evidence="1">Homotetramer; dimer of dimers.</text>
</comment>
<comment type="subcellular location">
    <subcellularLocation>
        <location evidence="1">Cytoplasm</location>
    </subcellularLocation>
</comment>
<comment type="similarity">
    <text evidence="1">Belongs to the DapA family.</text>
</comment>
<comment type="caution">
    <text evidence="2">Was originally thought to be a dihydrodipicolinate synthase (DHDPS), catalyzing the condensation of (S)-aspartate-beta-semialdehyde [(S)-ASA] and pyruvate to dihydrodipicolinate (DHDP). However, it was shown in E.coli that the product of the enzymatic reaction is not dihydrodipicolinate but in fact (4S)-4-hydroxy-2,3,4,5-tetrahydro-(2S)-dipicolinic acid (HTPA), and that the consecutive dehydration reaction leading to DHDP is not spontaneous but catalyzed by DapB.</text>
</comment>
<name>DAPA_HAEI8</name>
<sequence length="298" mass="32129">MSAQNPLFSGSIVALVTPMNHYGEVDFSCLEKLVEHHIEAGSNALVSVGTTGESATLSIEENVKVIEKTVEFAKGRIPIIAGAGANATSEAITMTKLLRDSGVAGCLSVVPYYNKPTQEGMYQHFKAIAECTDLPQILYNVPSRTGSDMKPETVARLAEIENIVGIKEATGDVSRIVKIKQLAGKNFIVLSGNDTTGLEAIKLGAEGVISVTNNIAAKDMADMCRYALAGDFDKAEEINARLMRLHHDLFIESNPIPVKWAAYRLGLIKSPHLRLPLTTLSEEIQPKVEDALKIAGLL</sequence>